<dbReference type="EC" id="6.3.4.16" evidence="1"/>
<dbReference type="EC" id="6.3.5.5" evidence="1"/>
<dbReference type="EMBL" id="AL157959">
    <property type="protein sequence ID" value="CAM07869.1"/>
    <property type="molecule type" value="Genomic_DNA"/>
</dbReference>
<dbReference type="PIR" id="F81979">
    <property type="entry name" value="F81979"/>
</dbReference>
<dbReference type="RefSeq" id="WP_002247142.1">
    <property type="nucleotide sequence ID" value="NC_003116.1"/>
</dbReference>
<dbReference type="SMR" id="Q9JW02"/>
<dbReference type="EnsemblBacteria" id="CAM07869">
    <property type="protein sequence ID" value="CAM07869"/>
    <property type="gene ID" value="NMA0602"/>
</dbReference>
<dbReference type="KEGG" id="nma:NMA0602"/>
<dbReference type="HOGENOM" id="CLU_000513_1_0_4"/>
<dbReference type="UniPathway" id="UPA00068">
    <property type="reaction ID" value="UER00171"/>
</dbReference>
<dbReference type="UniPathway" id="UPA00070">
    <property type="reaction ID" value="UER00115"/>
</dbReference>
<dbReference type="Proteomes" id="UP000000626">
    <property type="component" value="Chromosome"/>
</dbReference>
<dbReference type="GO" id="GO:0005737">
    <property type="term" value="C:cytoplasm"/>
    <property type="evidence" value="ECO:0007669"/>
    <property type="project" value="TreeGrafter"/>
</dbReference>
<dbReference type="GO" id="GO:0005524">
    <property type="term" value="F:ATP binding"/>
    <property type="evidence" value="ECO:0007669"/>
    <property type="project" value="UniProtKB-UniRule"/>
</dbReference>
<dbReference type="GO" id="GO:0004087">
    <property type="term" value="F:carbamoyl-phosphate synthase (ammonia) activity"/>
    <property type="evidence" value="ECO:0007669"/>
    <property type="project" value="RHEA"/>
</dbReference>
<dbReference type="GO" id="GO:0004088">
    <property type="term" value="F:carbamoyl-phosphate synthase (glutamine-hydrolyzing) activity"/>
    <property type="evidence" value="ECO:0007669"/>
    <property type="project" value="UniProtKB-UniRule"/>
</dbReference>
<dbReference type="GO" id="GO:0003677">
    <property type="term" value="F:DNA binding"/>
    <property type="evidence" value="ECO:0007669"/>
    <property type="project" value="InterPro"/>
</dbReference>
<dbReference type="GO" id="GO:0046872">
    <property type="term" value="F:metal ion binding"/>
    <property type="evidence" value="ECO:0007669"/>
    <property type="project" value="UniProtKB-KW"/>
</dbReference>
<dbReference type="GO" id="GO:0044205">
    <property type="term" value="P:'de novo' UMP biosynthetic process"/>
    <property type="evidence" value="ECO:0007669"/>
    <property type="project" value="UniProtKB-UniRule"/>
</dbReference>
<dbReference type="GO" id="GO:0006541">
    <property type="term" value="P:glutamine metabolic process"/>
    <property type="evidence" value="ECO:0007669"/>
    <property type="project" value="TreeGrafter"/>
</dbReference>
<dbReference type="GO" id="GO:0006526">
    <property type="term" value="P:L-arginine biosynthetic process"/>
    <property type="evidence" value="ECO:0007669"/>
    <property type="project" value="UniProtKB-UniRule"/>
</dbReference>
<dbReference type="GO" id="GO:0006355">
    <property type="term" value="P:regulation of DNA-templated transcription"/>
    <property type="evidence" value="ECO:0007669"/>
    <property type="project" value="InterPro"/>
</dbReference>
<dbReference type="CDD" id="cd01424">
    <property type="entry name" value="MGS_CPS_II"/>
    <property type="match status" value="1"/>
</dbReference>
<dbReference type="FunFam" id="1.10.1030.10:FF:000002">
    <property type="entry name" value="Carbamoyl-phosphate synthase large chain"/>
    <property type="match status" value="1"/>
</dbReference>
<dbReference type="FunFam" id="3.30.1490.20:FF:000001">
    <property type="entry name" value="Carbamoyl-phosphate synthase large chain"/>
    <property type="match status" value="1"/>
</dbReference>
<dbReference type="FunFam" id="3.30.470.20:FF:000007">
    <property type="entry name" value="Carbamoyl-phosphate synthase large chain"/>
    <property type="match status" value="1"/>
</dbReference>
<dbReference type="FunFam" id="3.30.470.20:FF:000013">
    <property type="entry name" value="Carbamoyl-phosphate synthase large chain"/>
    <property type="match status" value="1"/>
</dbReference>
<dbReference type="FunFam" id="3.40.50.20:FF:000001">
    <property type="entry name" value="Carbamoyl-phosphate synthase large chain"/>
    <property type="match status" value="1"/>
</dbReference>
<dbReference type="FunFam" id="3.40.50.20:FF:000003">
    <property type="entry name" value="Carbamoyl-phosphate synthase large chain"/>
    <property type="match status" value="1"/>
</dbReference>
<dbReference type="Gene3D" id="3.40.50.20">
    <property type="match status" value="2"/>
</dbReference>
<dbReference type="Gene3D" id="3.30.470.20">
    <property type="entry name" value="ATP-grasp fold, B domain"/>
    <property type="match status" value="2"/>
</dbReference>
<dbReference type="Gene3D" id="1.10.1030.10">
    <property type="entry name" value="Carbamoyl-phosphate synthetase, large subunit oligomerisation domain"/>
    <property type="match status" value="1"/>
</dbReference>
<dbReference type="Gene3D" id="3.40.50.1380">
    <property type="entry name" value="Methylglyoxal synthase-like domain"/>
    <property type="match status" value="1"/>
</dbReference>
<dbReference type="HAMAP" id="MF_01210_A">
    <property type="entry name" value="CPSase_L_chain_A"/>
    <property type="match status" value="1"/>
</dbReference>
<dbReference type="HAMAP" id="MF_01210_B">
    <property type="entry name" value="CPSase_L_chain_B"/>
    <property type="match status" value="1"/>
</dbReference>
<dbReference type="InterPro" id="IPR011761">
    <property type="entry name" value="ATP-grasp"/>
</dbReference>
<dbReference type="InterPro" id="IPR006275">
    <property type="entry name" value="CarbamoylP_synth_lsu"/>
</dbReference>
<dbReference type="InterPro" id="IPR005480">
    <property type="entry name" value="CarbamoylP_synth_lsu_oligo"/>
</dbReference>
<dbReference type="InterPro" id="IPR036897">
    <property type="entry name" value="CarbamoylP_synth_lsu_oligo_sf"/>
</dbReference>
<dbReference type="InterPro" id="IPR005479">
    <property type="entry name" value="CbamoylP_synth_lsu-like_ATP-bd"/>
</dbReference>
<dbReference type="InterPro" id="IPR005483">
    <property type="entry name" value="CbamoylP_synth_lsu_CPSase_dom"/>
</dbReference>
<dbReference type="InterPro" id="IPR000551">
    <property type="entry name" value="MerR-type_HTH_dom"/>
</dbReference>
<dbReference type="InterPro" id="IPR011607">
    <property type="entry name" value="MGS-like_dom"/>
</dbReference>
<dbReference type="InterPro" id="IPR036914">
    <property type="entry name" value="MGS-like_dom_sf"/>
</dbReference>
<dbReference type="InterPro" id="IPR033937">
    <property type="entry name" value="MGS_CPS_CarB"/>
</dbReference>
<dbReference type="InterPro" id="IPR016185">
    <property type="entry name" value="PreATP-grasp_dom_sf"/>
</dbReference>
<dbReference type="NCBIfam" id="TIGR01369">
    <property type="entry name" value="CPSaseII_lrg"/>
    <property type="match status" value="1"/>
</dbReference>
<dbReference type="NCBIfam" id="NF003671">
    <property type="entry name" value="PRK05294.1"/>
    <property type="match status" value="1"/>
</dbReference>
<dbReference type="NCBIfam" id="NF009455">
    <property type="entry name" value="PRK12815.1"/>
    <property type="match status" value="1"/>
</dbReference>
<dbReference type="PANTHER" id="PTHR11405:SF53">
    <property type="entry name" value="CARBAMOYL-PHOSPHATE SYNTHASE [AMMONIA], MITOCHONDRIAL"/>
    <property type="match status" value="1"/>
</dbReference>
<dbReference type="PANTHER" id="PTHR11405">
    <property type="entry name" value="CARBAMOYLTRANSFERASE FAMILY MEMBER"/>
    <property type="match status" value="1"/>
</dbReference>
<dbReference type="Pfam" id="PF02786">
    <property type="entry name" value="CPSase_L_D2"/>
    <property type="match status" value="2"/>
</dbReference>
<dbReference type="Pfam" id="PF02787">
    <property type="entry name" value="CPSase_L_D3"/>
    <property type="match status" value="1"/>
</dbReference>
<dbReference type="Pfam" id="PF02142">
    <property type="entry name" value="MGS"/>
    <property type="match status" value="1"/>
</dbReference>
<dbReference type="PRINTS" id="PR00098">
    <property type="entry name" value="CPSASE"/>
</dbReference>
<dbReference type="SMART" id="SM01096">
    <property type="entry name" value="CPSase_L_D3"/>
    <property type="match status" value="1"/>
</dbReference>
<dbReference type="SMART" id="SM00851">
    <property type="entry name" value="MGS"/>
    <property type="match status" value="1"/>
</dbReference>
<dbReference type="SUPFAM" id="SSF48108">
    <property type="entry name" value="Carbamoyl phosphate synthetase, large subunit connection domain"/>
    <property type="match status" value="1"/>
</dbReference>
<dbReference type="SUPFAM" id="SSF56059">
    <property type="entry name" value="Glutathione synthetase ATP-binding domain-like"/>
    <property type="match status" value="2"/>
</dbReference>
<dbReference type="SUPFAM" id="SSF52335">
    <property type="entry name" value="Methylglyoxal synthase-like"/>
    <property type="match status" value="1"/>
</dbReference>
<dbReference type="SUPFAM" id="SSF52440">
    <property type="entry name" value="PreATP-grasp domain"/>
    <property type="match status" value="2"/>
</dbReference>
<dbReference type="PROSITE" id="PS50975">
    <property type="entry name" value="ATP_GRASP"/>
    <property type="match status" value="2"/>
</dbReference>
<dbReference type="PROSITE" id="PS00866">
    <property type="entry name" value="CPSASE_1"/>
    <property type="match status" value="1"/>
</dbReference>
<dbReference type="PROSITE" id="PS00867">
    <property type="entry name" value="CPSASE_2"/>
    <property type="match status" value="2"/>
</dbReference>
<dbReference type="PROSITE" id="PS51855">
    <property type="entry name" value="MGS"/>
    <property type="match status" value="1"/>
</dbReference>
<reference key="1">
    <citation type="journal article" date="2000" name="Nature">
        <title>Complete DNA sequence of a serogroup A strain of Neisseria meningitidis Z2491.</title>
        <authorList>
            <person name="Parkhill J."/>
            <person name="Achtman M."/>
            <person name="James K.D."/>
            <person name="Bentley S.D."/>
            <person name="Churcher C.M."/>
            <person name="Klee S.R."/>
            <person name="Morelli G."/>
            <person name="Basham D."/>
            <person name="Brown D."/>
            <person name="Chillingworth T."/>
            <person name="Davies R.M."/>
            <person name="Davis P."/>
            <person name="Devlin K."/>
            <person name="Feltwell T."/>
            <person name="Hamlin N."/>
            <person name="Holroyd S."/>
            <person name="Jagels K."/>
            <person name="Leather S."/>
            <person name="Moule S."/>
            <person name="Mungall K.L."/>
            <person name="Quail M.A."/>
            <person name="Rajandream M.A."/>
            <person name="Rutherford K.M."/>
            <person name="Simmonds M."/>
            <person name="Skelton J."/>
            <person name="Whitehead S."/>
            <person name="Spratt B.G."/>
            <person name="Barrell B.G."/>
        </authorList>
    </citation>
    <scope>NUCLEOTIDE SEQUENCE [LARGE SCALE GENOMIC DNA]</scope>
    <source>
        <strain>DSM 15465 / Z2491</strain>
    </source>
</reference>
<name>CARB_NEIMA</name>
<keyword id="KW-0028">Amino-acid biosynthesis</keyword>
<keyword id="KW-0055">Arginine biosynthesis</keyword>
<keyword id="KW-0067">ATP-binding</keyword>
<keyword id="KW-0436">Ligase</keyword>
<keyword id="KW-0460">Magnesium</keyword>
<keyword id="KW-0464">Manganese</keyword>
<keyword id="KW-0479">Metal-binding</keyword>
<keyword id="KW-0547">Nucleotide-binding</keyword>
<keyword id="KW-0665">Pyrimidine biosynthesis</keyword>
<keyword id="KW-0677">Repeat</keyword>
<feature type="chain" id="PRO_0000145025" description="Carbamoyl phosphate synthase large chain">
    <location>
        <begin position="1"/>
        <end position="1071"/>
    </location>
</feature>
<feature type="domain" description="ATP-grasp 1" evidence="1">
    <location>
        <begin position="133"/>
        <end position="328"/>
    </location>
</feature>
<feature type="domain" description="ATP-grasp 2" evidence="1">
    <location>
        <begin position="673"/>
        <end position="864"/>
    </location>
</feature>
<feature type="domain" description="MGS-like" evidence="1">
    <location>
        <begin position="931"/>
        <end position="1071"/>
    </location>
</feature>
<feature type="region of interest" description="Carboxyphosphate synthetic domain" evidence="1">
    <location>
        <begin position="1"/>
        <end position="403"/>
    </location>
</feature>
<feature type="region of interest" description="Oligomerization domain" evidence="1">
    <location>
        <begin position="404"/>
        <end position="548"/>
    </location>
</feature>
<feature type="region of interest" description="Carbamoyl phosphate synthetic domain" evidence="1">
    <location>
        <begin position="549"/>
        <end position="930"/>
    </location>
</feature>
<feature type="region of interest" description="Allosteric domain" evidence="1">
    <location>
        <begin position="931"/>
        <end position="1071"/>
    </location>
</feature>
<feature type="binding site" evidence="1">
    <location>
        <position position="129"/>
    </location>
    <ligand>
        <name>ATP</name>
        <dbReference type="ChEBI" id="CHEBI:30616"/>
        <label>1</label>
    </ligand>
</feature>
<feature type="binding site" evidence="1">
    <location>
        <position position="169"/>
    </location>
    <ligand>
        <name>ATP</name>
        <dbReference type="ChEBI" id="CHEBI:30616"/>
        <label>1</label>
    </ligand>
</feature>
<feature type="binding site" evidence="1">
    <location>
        <position position="175"/>
    </location>
    <ligand>
        <name>ATP</name>
        <dbReference type="ChEBI" id="CHEBI:30616"/>
        <label>1</label>
    </ligand>
</feature>
<feature type="binding site" evidence="1">
    <location>
        <position position="176"/>
    </location>
    <ligand>
        <name>ATP</name>
        <dbReference type="ChEBI" id="CHEBI:30616"/>
        <label>1</label>
    </ligand>
</feature>
<feature type="binding site" evidence="1">
    <location>
        <position position="208"/>
    </location>
    <ligand>
        <name>ATP</name>
        <dbReference type="ChEBI" id="CHEBI:30616"/>
        <label>1</label>
    </ligand>
</feature>
<feature type="binding site" evidence="1">
    <location>
        <position position="210"/>
    </location>
    <ligand>
        <name>ATP</name>
        <dbReference type="ChEBI" id="CHEBI:30616"/>
        <label>1</label>
    </ligand>
</feature>
<feature type="binding site" evidence="1">
    <location>
        <position position="215"/>
    </location>
    <ligand>
        <name>ATP</name>
        <dbReference type="ChEBI" id="CHEBI:30616"/>
        <label>1</label>
    </ligand>
</feature>
<feature type="binding site" evidence="1">
    <location>
        <position position="241"/>
    </location>
    <ligand>
        <name>ATP</name>
        <dbReference type="ChEBI" id="CHEBI:30616"/>
        <label>1</label>
    </ligand>
</feature>
<feature type="binding site" evidence="1">
    <location>
        <position position="242"/>
    </location>
    <ligand>
        <name>ATP</name>
        <dbReference type="ChEBI" id="CHEBI:30616"/>
        <label>1</label>
    </ligand>
</feature>
<feature type="binding site" evidence="1">
    <location>
        <position position="243"/>
    </location>
    <ligand>
        <name>ATP</name>
        <dbReference type="ChEBI" id="CHEBI:30616"/>
        <label>1</label>
    </ligand>
</feature>
<feature type="binding site" evidence="1">
    <location>
        <position position="285"/>
    </location>
    <ligand>
        <name>ATP</name>
        <dbReference type="ChEBI" id="CHEBI:30616"/>
        <label>1</label>
    </ligand>
</feature>
<feature type="binding site" evidence="1">
    <location>
        <position position="285"/>
    </location>
    <ligand>
        <name>Mg(2+)</name>
        <dbReference type="ChEBI" id="CHEBI:18420"/>
        <label>1</label>
    </ligand>
</feature>
<feature type="binding site" evidence="1">
    <location>
        <position position="285"/>
    </location>
    <ligand>
        <name>Mn(2+)</name>
        <dbReference type="ChEBI" id="CHEBI:29035"/>
        <label>1</label>
    </ligand>
</feature>
<feature type="binding site" evidence="1">
    <location>
        <position position="299"/>
    </location>
    <ligand>
        <name>ATP</name>
        <dbReference type="ChEBI" id="CHEBI:30616"/>
        <label>1</label>
    </ligand>
</feature>
<feature type="binding site" evidence="1">
    <location>
        <position position="299"/>
    </location>
    <ligand>
        <name>Mg(2+)</name>
        <dbReference type="ChEBI" id="CHEBI:18420"/>
        <label>1</label>
    </ligand>
</feature>
<feature type="binding site" evidence="1">
    <location>
        <position position="299"/>
    </location>
    <ligand>
        <name>Mg(2+)</name>
        <dbReference type="ChEBI" id="CHEBI:18420"/>
        <label>2</label>
    </ligand>
</feature>
<feature type="binding site" evidence="1">
    <location>
        <position position="299"/>
    </location>
    <ligand>
        <name>Mn(2+)</name>
        <dbReference type="ChEBI" id="CHEBI:29035"/>
        <label>1</label>
    </ligand>
</feature>
<feature type="binding site" evidence="1">
    <location>
        <position position="299"/>
    </location>
    <ligand>
        <name>Mn(2+)</name>
        <dbReference type="ChEBI" id="CHEBI:29035"/>
        <label>2</label>
    </ligand>
</feature>
<feature type="binding site" evidence="1">
    <location>
        <position position="301"/>
    </location>
    <ligand>
        <name>Mg(2+)</name>
        <dbReference type="ChEBI" id="CHEBI:18420"/>
        <label>2</label>
    </ligand>
</feature>
<feature type="binding site" evidence="1">
    <location>
        <position position="301"/>
    </location>
    <ligand>
        <name>Mn(2+)</name>
        <dbReference type="ChEBI" id="CHEBI:29035"/>
        <label>2</label>
    </ligand>
</feature>
<feature type="binding site" evidence="1">
    <location>
        <position position="709"/>
    </location>
    <ligand>
        <name>ATP</name>
        <dbReference type="ChEBI" id="CHEBI:30616"/>
        <label>2</label>
    </ligand>
</feature>
<feature type="binding site" evidence="1">
    <location>
        <position position="748"/>
    </location>
    <ligand>
        <name>ATP</name>
        <dbReference type="ChEBI" id="CHEBI:30616"/>
        <label>2</label>
    </ligand>
</feature>
<feature type="binding site" evidence="1">
    <location>
        <position position="750"/>
    </location>
    <ligand>
        <name>ATP</name>
        <dbReference type="ChEBI" id="CHEBI:30616"/>
        <label>2</label>
    </ligand>
</feature>
<feature type="binding site" evidence="1">
    <location>
        <position position="755"/>
    </location>
    <ligand>
        <name>ATP</name>
        <dbReference type="ChEBI" id="CHEBI:30616"/>
        <label>2</label>
    </ligand>
</feature>
<feature type="binding site" evidence="1">
    <location>
        <position position="780"/>
    </location>
    <ligand>
        <name>ATP</name>
        <dbReference type="ChEBI" id="CHEBI:30616"/>
        <label>2</label>
    </ligand>
</feature>
<feature type="binding site" evidence="1">
    <location>
        <position position="781"/>
    </location>
    <ligand>
        <name>ATP</name>
        <dbReference type="ChEBI" id="CHEBI:30616"/>
        <label>2</label>
    </ligand>
</feature>
<feature type="binding site" evidence="1">
    <location>
        <position position="782"/>
    </location>
    <ligand>
        <name>ATP</name>
        <dbReference type="ChEBI" id="CHEBI:30616"/>
        <label>2</label>
    </ligand>
</feature>
<feature type="binding site" evidence="1">
    <location>
        <position position="783"/>
    </location>
    <ligand>
        <name>ATP</name>
        <dbReference type="ChEBI" id="CHEBI:30616"/>
        <label>2</label>
    </ligand>
</feature>
<feature type="binding site" evidence="1">
    <location>
        <position position="823"/>
    </location>
    <ligand>
        <name>ATP</name>
        <dbReference type="ChEBI" id="CHEBI:30616"/>
        <label>2</label>
    </ligand>
</feature>
<feature type="binding site" evidence="1">
    <location>
        <position position="823"/>
    </location>
    <ligand>
        <name>Mg(2+)</name>
        <dbReference type="ChEBI" id="CHEBI:18420"/>
        <label>3</label>
    </ligand>
</feature>
<feature type="binding site" evidence="1">
    <location>
        <position position="823"/>
    </location>
    <ligand>
        <name>Mn(2+)</name>
        <dbReference type="ChEBI" id="CHEBI:29035"/>
        <label>3</label>
    </ligand>
</feature>
<feature type="binding site" evidence="1">
    <location>
        <position position="835"/>
    </location>
    <ligand>
        <name>ATP</name>
        <dbReference type="ChEBI" id="CHEBI:30616"/>
        <label>2</label>
    </ligand>
</feature>
<feature type="binding site" evidence="1">
    <location>
        <position position="835"/>
    </location>
    <ligand>
        <name>Mg(2+)</name>
        <dbReference type="ChEBI" id="CHEBI:18420"/>
        <label>3</label>
    </ligand>
</feature>
<feature type="binding site" evidence="1">
    <location>
        <position position="835"/>
    </location>
    <ligand>
        <name>Mg(2+)</name>
        <dbReference type="ChEBI" id="CHEBI:18420"/>
        <label>4</label>
    </ligand>
</feature>
<feature type="binding site" evidence="1">
    <location>
        <position position="835"/>
    </location>
    <ligand>
        <name>Mn(2+)</name>
        <dbReference type="ChEBI" id="CHEBI:29035"/>
        <label>3</label>
    </ligand>
</feature>
<feature type="binding site" evidence="1">
    <location>
        <position position="835"/>
    </location>
    <ligand>
        <name>Mn(2+)</name>
        <dbReference type="ChEBI" id="CHEBI:29035"/>
        <label>4</label>
    </ligand>
</feature>
<feature type="binding site" evidence="1">
    <location>
        <position position="837"/>
    </location>
    <ligand>
        <name>Mg(2+)</name>
        <dbReference type="ChEBI" id="CHEBI:18420"/>
        <label>4</label>
    </ligand>
</feature>
<feature type="binding site" evidence="1">
    <location>
        <position position="837"/>
    </location>
    <ligand>
        <name>Mn(2+)</name>
        <dbReference type="ChEBI" id="CHEBI:29035"/>
        <label>4</label>
    </ligand>
</feature>
<accession>Q9JW02</accession>
<accession>A1IQ43</accession>
<gene>
    <name evidence="1" type="primary">carB</name>
    <name type="ordered locus">NMA0602</name>
</gene>
<organism>
    <name type="scientific">Neisseria meningitidis serogroup A / serotype 4A (strain DSM 15465 / Z2491)</name>
    <dbReference type="NCBI Taxonomy" id="122587"/>
    <lineage>
        <taxon>Bacteria</taxon>
        <taxon>Pseudomonadati</taxon>
        <taxon>Pseudomonadota</taxon>
        <taxon>Betaproteobacteria</taxon>
        <taxon>Neisseriales</taxon>
        <taxon>Neisseriaceae</taxon>
        <taxon>Neisseria</taxon>
    </lineage>
</organism>
<sequence>MPKRTDLKSILIIGAGPIVIGQACEFDYSGAQACKALREEGYKVILVNSNPATIMTDPEMADVTYIEPIMWQTVEKIIAKERPDAILPTMGGQTALNCALDLARNGVLAKYNVELIGATEDAIDKAEDRGRFKEAMEKIGLSCPKSFVCHTMNEALAAQEQVGFPTLIRPSFTMGGSGGGIAYNKDEFLAICERGFDASPTHELLIEQSVLGWKEYEMEVVRDKNDNCIIICSIENFDPMGVHTGDSITVAPAQTLTDKEYQIMRNASLAVLREIGVDTGGSNVQFAVNPENGEMIVIEMNPRVSRSSALASKATGFPIAKVAAKLAVGFTLDELRNDITGGRTPASFEPSIDYVVTKIPRFAFEKFPAADDRLTTQMKSVGEVMAMGRTIQESFQKALRGLETGLCGFNPRSSDKAEIRRELANPGPERMLFVADAFRAGFTLEEIHEICAIDPWFLAQIEDLMKEEKAVSDGVLSDLDYAALRRLKRKGFSDKRIAQLLDVKEKEVREHRYVLNLHPVYKRVDTCAAEFATETAYLYSTYEEECEARPSDRKKVMILGGGPNRIGQGIEFDYCCVHAALALRESGFETIMVNCNPETVSTDFDTSDRLYFEPLTLEDVLEIVRTENPWGVIVHYGGQTPLKLANALVENGVNIIGTSADSIDAAEDRERFQKVLNDLGLRQPPNRIAHNEEEALVKAEEIGYPLVVRPSYVLGGRAMQIVHSAEQLQKYMREAVQVSEDSPVLLDFFLNNAIEVDVDCVSDGKDVVIGGIMQHVEQAGIHSGDSGCSLPPYSLSEEIQDEIRRQTKAMAYALGVVGLMNVQFAVQDGVVFVLEVNPRASRTVPFVSKATGVPLAKVGARCMAGISLKEQGVEKEVVPDFYAVKEAVFPFIKFPGVDTILGPEMRSTGEVMGVGASFGEAYYKAQLGAGERLNPTGKIFLSVREEDKERVIKTAKNFQALGYGICATRGTAQYLTEHGLIVQTINKVPEGRPHIGDALKNGEIALVVNTVSSDPQSVSDSHIIRQSALQQRVPQYTTTAGGEAMSEGAKSRDHLGVYSVQELHGRLKNRS</sequence>
<proteinExistence type="inferred from homology"/>
<evidence type="ECO:0000255" key="1">
    <source>
        <dbReference type="HAMAP-Rule" id="MF_01210"/>
    </source>
</evidence>
<protein>
    <recommendedName>
        <fullName evidence="1">Carbamoyl phosphate synthase large chain</fullName>
        <ecNumber evidence="1">6.3.4.16</ecNumber>
        <ecNumber evidence="1">6.3.5.5</ecNumber>
    </recommendedName>
    <alternativeName>
        <fullName evidence="1">Carbamoyl phosphate synthetase ammonia chain</fullName>
    </alternativeName>
</protein>
<comment type="function">
    <text evidence="1">Large subunit of the glutamine-dependent carbamoyl phosphate synthetase (CPSase). CPSase catalyzes the formation of carbamoyl phosphate from the ammonia moiety of glutamine, carbonate, and phosphate donated by ATP, constituting the first step of 2 biosynthetic pathways, one leading to arginine and/or urea and the other to pyrimidine nucleotides. The large subunit (synthetase) binds the substrates ammonia (free or transferred from glutamine from the small subunit), hydrogencarbonate and ATP and carries out an ATP-coupled ligase reaction, activating hydrogencarbonate by forming carboxy phosphate which reacts with ammonia to form carbamoyl phosphate.</text>
</comment>
<comment type="catalytic activity">
    <reaction evidence="1">
        <text>hydrogencarbonate + L-glutamine + 2 ATP + H2O = carbamoyl phosphate + L-glutamate + 2 ADP + phosphate + 2 H(+)</text>
        <dbReference type="Rhea" id="RHEA:18633"/>
        <dbReference type="ChEBI" id="CHEBI:15377"/>
        <dbReference type="ChEBI" id="CHEBI:15378"/>
        <dbReference type="ChEBI" id="CHEBI:17544"/>
        <dbReference type="ChEBI" id="CHEBI:29985"/>
        <dbReference type="ChEBI" id="CHEBI:30616"/>
        <dbReference type="ChEBI" id="CHEBI:43474"/>
        <dbReference type="ChEBI" id="CHEBI:58228"/>
        <dbReference type="ChEBI" id="CHEBI:58359"/>
        <dbReference type="ChEBI" id="CHEBI:456216"/>
        <dbReference type="EC" id="6.3.5.5"/>
    </reaction>
</comment>
<comment type="catalytic activity">
    <molecule>Carbamoyl phosphate synthase large chain</molecule>
    <reaction evidence="1">
        <text>hydrogencarbonate + NH4(+) + 2 ATP = carbamoyl phosphate + 2 ADP + phosphate + 2 H(+)</text>
        <dbReference type="Rhea" id="RHEA:18029"/>
        <dbReference type="ChEBI" id="CHEBI:15378"/>
        <dbReference type="ChEBI" id="CHEBI:17544"/>
        <dbReference type="ChEBI" id="CHEBI:28938"/>
        <dbReference type="ChEBI" id="CHEBI:30616"/>
        <dbReference type="ChEBI" id="CHEBI:43474"/>
        <dbReference type="ChEBI" id="CHEBI:58228"/>
        <dbReference type="ChEBI" id="CHEBI:456216"/>
        <dbReference type="EC" id="6.3.4.16"/>
    </reaction>
</comment>
<comment type="cofactor">
    <cofactor evidence="1">
        <name>Mg(2+)</name>
        <dbReference type="ChEBI" id="CHEBI:18420"/>
    </cofactor>
    <cofactor evidence="1">
        <name>Mn(2+)</name>
        <dbReference type="ChEBI" id="CHEBI:29035"/>
    </cofactor>
    <text evidence="1">Binds 4 Mg(2+) or Mn(2+) ions per subunit.</text>
</comment>
<comment type="pathway">
    <text evidence="1">Amino-acid biosynthesis; L-arginine biosynthesis; carbamoyl phosphate from bicarbonate: step 1/1.</text>
</comment>
<comment type="pathway">
    <text evidence="1">Pyrimidine metabolism; UMP biosynthesis via de novo pathway; (S)-dihydroorotate from bicarbonate: step 1/3.</text>
</comment>
<comment type="subunit">
    <text evidence="1">Composed of two chains; the small (or glutamine) chain promotes the hydrolysis of glutamine to ammonia, which is used by the large (or ammonia) chain to synthesize carbamoyl phosphate. Tetramer of heterodimers (alpha,beta)4.</text>
</comment>
<comment type="domain">
    <text evidence="1">The large subunit is composed of 2 ATP-grasp domains that are involved in binding the 2 ATP molecules needed for carbamoyl phosphate synthesis. The N-terminal ATP-grasp domain (referred to as the carboxyphosphate synthetic component) catalyzes the ATP-dependent phosphorylation of hydrogencarbonate to carboxyphosphate and the subsequent nucleophilic attack by ammonia to form a carbamate intermediate. The C-terminal ATP-grasp domain (referred to as the carbamoyl phosphate synthetic component) then catalyzes the phosphorylation of carbamate with the second ATP to form the end product carbamoyl phosphate. The reactive and unstable enzyme intermediates are sequentially channeled from one active site to the next through the interior of the protein over a distance of at least 96 A.</text>
</comment>
<comment type="similarity">
    <text evidence="1">Belongs to the CarB family.</text>
</comment>